<proteinExistence type="inferred from homology"/>
<evidence type="ECO:0000255" key="1">
    <source>
        <dbReference type="HAMAP-Rule" id="MF_00073"/>
    </source>
</evidence>
<organism>
    <name type="scientific">Burkholderia ambifaria (strain MC40-6)</name>
    <dbReference type="NCBI Taxonomy" id="398577"/>
    <lineage>
        <taxon>Bacteria</taxon>
        <taxon>Pseudomonadati</taxon>
        <taxon>Pseudomonadota</taxon>
        <taxon>Betaproteobacteria</taxon>
        <taxon>Burkholderiales</taxon>
        <taxon>Burkholderiaceae</taxon>
        <taxon>Burkholderia</taxon>
        <taxon>Burkholderia cepacia complex</taxon>
    </lineage>
</organism>
<protein>
    <recommendedName>
        <fullName evidence="1">Transcription antitermination protein NusB</fullName>
    </recommendedName>
    <alternativeName>
        <fullName evidence="1">Antitermination factor NusB</fullName>
    </alternativeName>
</protein>
<gene>
    <name evidence="1" type="primary">nusB</name>
    <name type="ordered locus">BamMC406_0825</name>
</gene>
<comment type="function">
    <text evidence="1">Involved in transcription antitermination. Required for transcription of ribosomal RNA (rRNA) genes. Binds specifically to the boxA antiterminator sequence of the ribosomal RNA (rrn) operons.</text>
</comment>
<comment type="similarity">
    <text evidence="1">Belongs to the NusB family.</text>
</comment>
<keyword id="KW-0694">RNA-binding</keyword>
<keyword id="KW-0804">Transcription</keyword>
<keyword id="KW-0889">Transcription antitermination</keyword>
<keyword id="KW-0805">Transcription regulation</keyword>
<sequence>MKKSARRQSRELATQGLYQWLLSNAAPGEIDAQLRGALGYDKADKELLDAILHGVIREHATLIEALTPSLDRPVDQLSPVERAVLLIATFELTHHVETPYRVIINEAVELAKTFGGSDGYKYVNGVLDKLAAKLRPAETQARRNG</sequence>
<accession>B1YUJ1</accession>
<dbReference type="EMBL" id="CP001025">
    <property type="protein sequence ID" value="ACB63318.1"/>
    <property type="molecule type" value="Genomic_DNA"/>
</dbReference>
<dbReference type="RefSeq" id="WP_006754954.1">
    <property type="nucleotide sequence ID" value="NC_010551.1"/>
</dbReference>
<dbReference type="SMR" id="B1YUJ1"/>
<dbReference type="GeneID" id="93083777"/>
<dbReference type="KEGG" id="bac:BamMC406_0825"/>
<dbReference type="HOGENOM" id="CLU_087843_4_1_4"/>
<dbReference type="OrthoDB" id="9789556at2"/>
<dbReference type="Proteomes" id="UP000001680">
    <property type="component" value="Chromosome 1"/>
</dbReference>
<dbReference type="GO" id="GO:0005829">
    <property type="term" value="C:cytosol"/>
    <property type="evidence" value="ECO:0007669"/>
    <property type="project" value="TreeGrafter"/>
</dbReference>
<dbReference type="GO" id="GO:0003723">
    <property type="term" value="F:RNA binding"/>
    <property type="evidence" value="ECO:0007669"/>
    <property type="project" value="UniProtKB-UniRule"/>
</dbReference>
<dbReference type="GO" id="GO:0006353">
    <property type="term" value="P:DNA-templated transcription termination"/>
    <property type="evidence" value="ECO:0007669"/>
    <property type="project" value="UniProtKB-UniRule"/>
</dbReference>
<dbReference type="GO" id="GO:0031564">
    <property type="term" value="P:transcription antitermination"/>
    <property type="evidence" value="ECO:0007669"/>
    <property type="project" value="UniProtKB-KW"/>
</dbReference>
<dbReference type="Gene3D" id="1.10.940.10">
    <property type="entry name" value="NusB-like"/>
    <property type="match status" value="1"/>
</dbReference>
<dbReference type="HAMAP" id="MF_00073">
    <property type="entry name" value="NusB"/>
    <property type="match status" value="1"/>
</dbReference>
<dbReference type="InterPro" id="IPR035926">
    <property type="entry name" value="NusB-like_sf"/>
</dbReference>
<dbReference type="InterPro" id="IPR011605">
    <property type="entry name" value="NusB_fam"/>
</dbReference>
<dbReference type="InterPro" id="IPR006027">
    <property type="entry name" value="NusB_RsmB_TIM44"/>
</dbReference>
<dbReference type="NCBIfam" id="TIGR01951">
    <property type="entry name" value="nusB"/>
    <property type="match status" value="1"/>
</dbReference>
<dbReference type="PANTHER" id="PTHR11078:SF3">
    <property type="entry name" value="ANTITERMINATION NUSB DOMAIN-CONTAINING PROTEIN"/>
    <property type="match status" value="1"/>
</dbReference>
<dbReference type="PANTHER" id="PTHR11078">
    <property type="entry name" value="N UTILIZATION SUBSTANCE PROTEIN B-RELATED"/>
    <property type="match status" value="1"/>
</dbReference>
<dbReference type="Pfam" id="PF01029">
    <property type="entry name" value="NusB"/>
    <property type="match status" value="1"/>
</dbReference>
<dbReference type="SUPFAM" id="SSF48013">
    <property type="entry name" value="NusB-like"/>
    <property type="match status" value="1"/>
</dbReference>
<reference key="1">
    <citation type="submission" date="2008-04" db="EMBL/GenBank/DDBJ databases">
        <title>Complete sequence of chromosome 1 of Burkholderia ambifaria MC40-6.</title>
        <authorList>
            <person name="Copeland A."/>
            <person name="Lucas S."/>
            <person name="Lapidus A."/>
            <person name="Glavina del Rio T."/>
            <person name="Dalin E."/>
            <person name="Tice H."/>
            <person name="Pitluck S."/>
            <person name="Chain P."/>
            <person name="Malfatti S."/>
            <person name="Shin M."/>
            <person name="Vergez L."/>
            <person name="Lang D."/>
            <person name="Schmutz J."/>
            <person name="Larimer F."/>
            <person name="Land M."/>
            <person name="Hauser L."/>
            <person name="Kyrpides N."/>
            <person name="Lykidis A."/>
            <person name="Ramette A."/>
            <person name="Konstantinidis K."/>
            <person name="Tiedje J."/>
            <person name="Richardson P."/>
        </authorList>
    </citation>
    <scope>NUCLEOTIDE SEQUENCE [LARGE SCALE GENOMIC DNA]</scope>
    <source>
        <strain>MC40-6</strain>
    </source>
</reference>
<name>NUSB_BURA4</name>
<feature type="chain" id="PRO_1000092529" description="Transcription antitermination protein NusB">
    <location>
        <begin position="1"/>
        <end position="145"/>
    </location>
</feature>